<accession>A6UUL6</accession>
<dbReference type="EC" id="4.1.1.50" evidence="1"/>
<dbReference type="EMBL" id="CP000743">
    <property type="protein sequence ID" value="ABR56188.1"/>
    <property type="molecule type" value="Genomic_DNA"/>
</dbReference>
<dbReference type="RefSeq" id="WP_011973320.1">
    <property type="nucleotide sequence ID" value="NC_009635.1"/>
</dbReference>
<dbReference type="SMR" id="A6UUL6"/>
<dbReference type="STRING" id="419665.Maeo_0603"/>
<dbReference type="GeneID" id="5326474"/>
<dbReference type="KEGG" id="mae:Maeo_0603"/>
<dbReference type="eggNOG" id="arCOG00279">
    <property type="taxonomic scope" value="Archaea"/>
</dbReference>
<dbReference type="HOGENOM" id="CLU_125470_2_3_2"/>
<dbReference type="OrthoDB" id="114016at2157"/>
<dbReference type="UniPathway" id="UPA00331">
    <property type="reaction ID" value="UER00451"/>
</dbReference>
<dbReference type="Proteomes" id="UP000001106">
    <property type="component" value="Chromosome"/>
</dbReference>
<dbReference type="GO" id="GO:0005829">
    <property type="term" value="C:cytosol"/>
    <property type="evidence" value="ECO:0007669"/>
    <property type="project" value="TreeGrafter"/>
</dbReference>
<dbReference type="GO" id="GO:0004014">
    <property type="term" value="F:adenosylmethionine decarboxylase activity"/>
    <property type="evidence" value="ECO:0007669"/>
    <property type="project" value="UniProtKB-UniRule"/>
</dbReference>
<dbReference type="GO" id="GO:0008295">
    <property type="term" value="P:spermidine biosynthetic process"/>
    <property type="evidence" value="ECO:0007669"/>
    <property type="project" value="UniProtKB-UniRule"/>
</dbReference>
<dbReference type="FunFam" id="3.30.360.110:FF:000001">
    <property type="entry name" value="S-adenosylmethionine decarboxylase proenzyme"/>
    <property type="match status" value="1"/>
</dbReference>
<dbReference type="Gene3D" id="3.30.160.750">
    <property type="match status" value="1"/>
</dbReference>
<dbReference type="Gene3D" id="3.30.360.110">
    <property type="entry name" value="S-adenosylmethionine decarboxylase domain"/>
    <property type="match status" value="1"/>
</dbReference>
<dbReference type="HAMAP" id="MF_00464">
    <property type="entry name" value="AdoMetDC_1"/>
    <property type="match status" value="1"/>
</dbReference>
<dbReference type="InterPro" id="IPR042286">
    <property type="entry name" value="AdoMetDC_C"/>
</dbReference>
<dbReference type="InterPro" id="IPR003826">
    <property type="entry name" value="AdoMetDC_fam_prok"/>
</dbReference>
<dbReference type="InterPro" id="IPR042284">
    <property type="entry name" value="AdoMetDC_N"/>
</dbReference>
<dbReference type="InterPro" id="IPR016067">
    <property type="entry name" value="S-AdoMet_deCO2ase_core"/>
</dbReference>
<dbReference type="InterPro" id="IPR017716">
    <property type="entry name" value="S-AdoMet_deCOase_pro-enz"/>
</dbReference>
<dbReference type="NCBIfam" id="TIGR03330">
    <property type="entry name" value="SAM_DCase_Bsu"/>
    <property type="match status" value="1"/>
</dbReference>
<dbReference type="PANTHER" id="PTHR33866">
    <property type="entry name" value="S-ADENOSYLMETHIONINE DECARBOXYLASE PROENZYME"/>
    <property type="match status" value="1"/>
</dbReference>
<dbReference type="PANTHER" id="PTHR33866:SF2">
    <property type="entry name" value="S-ADENOSYLMETHIONINE DECARBOXYLASE PROENZYME"/>
    <property type="match status" value="1"/>
</dbReference>
<dbReference type="Pfam" id="PF02675">
    <property type="entry name" value="AdoMet_dc"/>
    <property type="match status" value="1"/>
</dbReference>
<dbReference type="SUPFAM" id="SSF56276">
    <property type="entry name" value="S-adenosylmethionine decarboxylase"/>
    <property type="match status" value="1"/>
</dbReference>
<organism>
    <name type="scientific">Methanococcus aeolicus (strain ATCC BAA-1280 / DSM 17508 / OCM 812 / Nankai-3)</name>
    <dbReference type="NCBI Taxonomy" id="419665"/>
    <lineage>
        <taxon>Archaea</taxon>
        <taxon>Methanobacteriati</taxon>
        <taxon>Methanobacteriota</taxon>
        <taxon>Methanomada group</taxon>
        <taxon>Methanococci</taxon>
        <taxon>Methanococcales</taxon>
        <taxon>Methanococcaceae</taxon>
        <taxon>Methanococcus</taxon>
    </lineage>
</organism>
<keyword id="KW-0068">Autocatalytic cleavage</keyword>
<keyword id="KW-0210">Decarboxylase</keyword>
<keyword id="KW-0456">Lyase</keyword>
<keyword id="KW-0620">Polyamine biosynthesis</keyword>
<keyword id="KW-0670">Pyruvate</keyword>
<keyword id="KW-0949">S-adenosyl-L-methionine</keyword>
<keyword id="KW-0704">Schiff base</keyword>
<keyword id="KW-0745">Spermidine biosynthesis</keyword>
<keyword id="KW-0865">Zymogen</keyword>
<name>SPEH_META3</name>
<gene>
    <name evidence="1" type="primary">speH</name>
    <name type="ordered locus">Maeo_0603</name>
</gene>
<protein>
    <recommendedName>
        <fullName evidence="1">S-adenosylmethionine decarboxylase proenzyme</fullName>
        <shortName evidence="1">AdoMetDC</shortName>
        <shortName evidence="1">SAMDC</shortName>
        <ecNumber evidence="1">4.1.1.50</ecNumber>
    </recommendedName>
    <component>
        <recommendedName>
            <fullName evidence="1">S-adenosylmethionine decarboxylase beta chain</fullName>
        </recommendedName>
    </component>
    <component>
        <recommendedName>
            <fullName evidence="1">S-adenosylmethionine decarboxylase alpha chain</fullName>
        </recommendedName>
    </component>
</protein>
<comment type="function">
    <text evidence="1">Catalyzes the decarboxylation of S-adenosylmethionine to S-adenosylmethioninamine (dcAdoMet), the propylamine donor required for the synthesis of the polyamines spermine and spermidine from the diamine putrescine.</text>
</comment>
<comment type="catalytic activity">
    <reaction evidence="1">
        <text>S-adenosyl-L-methionine + H(+) = S-adenosyl 3-(methylsulfanyl)propylamine + CO2</text>
        <dbReference type="Rhea" id="RHEA:15981"/>
        <dbReference type="ChEBI" id="CHEBI:15378"/>
        <dbReference type="ChEBI" id="CHEBI:16526"/>
        <dbReference type="ChEBI" id="CHEBI:57443"/>
        <dbReference type="ChEBI" id="CHEBI:59789"/>
        <dbReference type="EC" id="4.1.1.50"/>
    </reaction>
</comment>
<comment type="cofactor">
    <cofactor evidence="1">
        <name>pyruvate</name>
        <dbReference type="ChEBI" id="CHEBI:15361"/>
    </cofactor>
    <text evidence="1">Binds 1 pyruvoyl group covalently per subunit.</text>
</comment>
<comment type="pathway">
    <text evidence="1">Amine and polyamine biosynthesis; S-adenosylmethioninamine biosynthesis; S-adenosylmethioninamine from S-adenosyl-L-methionine: step 1/1.</text>
</comment>
<comment type="subunit">
    <text evidence="1">Heterotetramer of two alpha and two beta chains arranged as a dimer of alpha/beta heterodimers.</text>
</comment>
<comment type="PTM">
    <text evidence="1">Is synthesized initially as an inactive proenzyme. Formation of the active enzyme involves a self-maturation process in which the active site pyruvoyl group is generated from an internal serine residue via an autocatalytic post-translational modification. Two non-identical subunits are generated from the proenzyme in this reaction, and the pyruvate is formed at the N-terminus of the alpha chain, which is derived from the carboxyl end of the proenzyme. The post-translation cleavage follows an unusual pathway, termed non-hydrolytic serinolysis, in which the side chain hydroxyl group of the serine supplies its oxygen atom to form the C-terminus of the beta chain, while the remainder of the serine residue undergoes an oxidative deamination to produce ammonia and the pyruvoyl group blocking the N-terminus of the alpha chain.</text>
</comment>
<comment type="similarity">
    <text evidence="1">Belongs to the prokaryotic AdoMetDC family. Type 1 subfamily.</text>
</comment>
<reference key="1">
    <citation type="submission" date="2007-06" db="EMBL/GenBank/DDBJ databases">
        <title>Complete sequence of Methanococcus aeolicus Nankai-3.</title>
        <authorList>
            <consortium name="US DOE Joint Genome Institute"/>
            <person name="Copeland A."/>
            <person name="Lucas S."/>
            <person name="Lapidus A."/>
            <person name="Barry K."/>
            <person name="Glavina del Rio T."/>
            <person name="Dalin E."/>
            <person name="Tice H."/>
            <person name="Pitluck S."/>
            <person name="Chain P."/>
            <person name="Malfatti S."/>
            <person name="Shin M."/>
            <person name="Vergez L."/>
            <person name="Schmutz J."/>
            <person name="Larimer F."/>
            <person name="Land M."/>
            <person name="Hauser L."/>
            <person name="Kyrpides N."/>
            <person name="Lykidis A."/>
            <person name="Sieprawska-Lupa M."/>
            <person name="Whitman W.B."/>
            <person name="Richardson P."/>
        </authorList>
    </citation>
    <scope>NUCLEOTIDE SEQUENCE [LARGE SCALE GENOMIC DNA]</scope>
    <source>
        <strain>ATCC BAA-1280 / DSM 17508 / OCM 812 / Nankai-3</strain>
    </source>
</reference>
<sequence length="117" mass="12947">MKHLGKHLIMELWDCDKQALDNQAGVEKMLEDATNSCGATLICIRTHKFSPQGVTGVAVLAESHISIHTWPEIGYAAMDIFTCGEHVNPEDAIPAIRDFLKPAKFDIIDIKRGSMVE</sequence>
<evidence type="ECO:0000255" key="1">
    <source>
        <dbReference type="HAMAP-Rule" id="MF_00464"/>
    </source>
</evidence>
<proteinExistence type="inferred from homology"/>
<feature type="chain" id="PRO_1000013675" description="S-adenosylmethionine decarboxylase beta chain" evidence="1">
    <location>
        <begin position="1"/>
        <end position="62"/>
    </location>
</feature>
<feature type="chain" id="PRO_0000315037" description="S-adenosylmethionine decarboxylase alpha chain" evidence="1">
    <location>
        <begin position="63"/>
        <end position="117"/>
    </location>
</feature>
<feature type="active site" description="Schiff-base intermediate with substrate; via pyruvic acid" evidence="1">
    <location>
        <position position="63"/>
    </location>
</feature>
<feature type="active site" description="Proton acceptor; for processing activity" evidence="1">
    <location>
        <position position="68"/>
    </location>
</feature>
<feature type="active site" description="Proton donor; for catalytic activity" evidence="1">
    <location>
        <position position="83"/>
    </location>
</feature>
<feature type="site" description="Cleavage (non-hydrolytic); by autolysis" evidence="1">
    <location>
        <begin position="62"/>
        <end position="63"/>
    </location>
</feature>
<feature type="modified residue" description="Pyruvic acid (Ser); by autocatalysis" evidence="1">
    <location>
        <position position="63"/>
    </location>
</feature>